<comment type="function">
    <text evidence="1">Involved in the heme biosynthesis. Catalyzes the aerobic oxidative decarboxylation of propionate groups of rings A and B of coproporphyrinogen-III to yield the vinyl groups in protoporphyrinogen-IX.</text>
</comment>
<comment type="catalytic activity">
    <reaction evidence="1">
        <text>coproporphyrinogen III + O2 + 2 H(+) = protoporphyrinogen IX + 2 CO2 + 2 H2O</text>
        <dbReference type="Rhea" id="RHEA:18257"/>
        <dbReference type="ChEBI" id="CHEBI:15377"/>
        <dbReference type="ChEBI" id="CHEBI:15378"/>
        <dbReference type="ChEBI" id="CHEBI:15379"/>
        <dbReference type="ChEBI" id="CHEBI:16526"/>
        <dbReference type="ChEBI" id="CHEBI:57307"/>
        <dbReference type="ChEBI" id="CHEBI:57309"/>
        <dbReference type="EC" id="1.3.3.3"/>
    </reaction>
</comment>
<comment type="cofactor">
    <cofactor evidence="1">
        <name>a divalent metal cation</name>
        <dbReference type="ChEBI" id="CHEBI:60240"/>
    </cofactor>
</comment>
<comment type="pathway">
    <text evidence="1">Porphyrin-containing compound metabolism; protoporphyrin-IX biosynthesis; protoporphyrinogen-IX from coproporphyrinogen-III (O2 route): step 1/1.</text>
</comment>
<comment type="subunit">
    <text evidence="1">Homodimer.</text>
</comment>
<comment type="subcellular location">
    <subcellularLocation>
        <location evidence="1">Cytoplasm</location>
    </subcellularLocation>
</comment>
<comment type="similarity">
    <text evidence="1">Belongs to the aerobic coproporphyrinogen-III oxidase family.</text>
</comment>
<keyword id="KW-0963">Cytoplasm</keyword>
<keyword id="KW-0350">Heme biosynthesis</keyword>
<keyword id="KW-0479">Metal-binding</keyword>
<keyword id="KW-0560">Oxidoreductase</keyword>
<keyword id="KW-0627">Porphyrin biosynthesis</keyword>
<keyword id="KW-1185">Reference proteome</keyword>
<proteinExistence type="inferred from homology"/>
<name>HEM6_SHESH</name>
<gene>
    <name evidence="1" type="primary">hemF</name>
    <name type="ordered locus">Ssed_0042</name>
</gene>
<dbReference type="EC" id="1.3.3.3" evidence="1"/>
<dbReference type="EMBL" id="CP000821">
    <property type="protein sequence ID" value="ABV34655.1"/>
    <property type="molecule type" value="Genomic_DNA"/>
</dbReference>
<dbReference type="RefSeq" id="WP_012004181.1">
    <property type="nucleotide sequence ID" value="NC_009831.1"/>
</dbReference>
<dbReference type="SMR" id="A8FP82"/>
<dbReference type="STRING" id="425104.Ssed_0042"/>
<dbReference type="KEGG" id="sse:Ssed_0042"/>
<dbReference type="eggNOG" id="COG0408">
    <property type="taxonomic scope" value="Bacteria"/>
</dbReference>
<dbReference type="HOGENOM" id="CLU_026169_0_1_6"/>
<dbReference type="OrthoDB" id="9777553at2"/>
<dbReference type="UniPathway" id="UPA00251">
    <property type="reaction ID" value="UER00322"/>
</dbReference>
<dbReference type="Proteomes" id="UP000002015">
    <property type="component" value="Chromosome"/>
</dbReference>
<dbReference type="GO" id="GO:0005737">
    <property type="term" value="C:cytoplasm"/>
    <property type="evidence" value="ECO:0007669"/>
    <property type="project" value="UniProtKB-SubCell"/>
</dbReference>
<dbReference type="GO" id="GO:0004109">
    <property type="term" value="F:coproporphyrinogen oxidase activity"/>
    <property type="evidence" value="ECO:0007669"/>
    <property type="project" value="UniProtKB-UniRule"/>
</dbReference>
<dbReference type="GO" id="GO:0046872">
    <property type="term" value="F:metal ion binding"/>
    <property type="evidence" value="ECO:0007669"/>
    <property type="project" value="UniProtKB-KW"/>
</dbReference>
<dbReference type="GO" id="GO:0042803">
    <property type="term" value="F:protein homodimerization activity"/>
    <property type="evidence" value="ECO:0000250"/>
    <property type="project" value="UniProtKB"/>
</dbReference>
<dbReference type="GO" id="GO:0006782">
    <property type="term" value="P:protoporphyrinogen IX biosynthetic process"/>
    <property type="evidence" value="ECO:0007669"/>
    <property type="project" value="UniProtKB-UniRule"/>
</dbReference>
<dbReference type="FunFam" id="3.40.1500.10:FF:000001">
    <property type="entry name" value="Oxygen-dependent coproporphyrinogen-III oxidase"/>
    <property type="match status" value="1"/>
</dbReference>
<dbReference type="Gene3D" id="3.40.1500.10">
    <property type="entry name" value="Coproporphyrinogen III oxidase, aerobic"/>
    <property type="match status" value="1"/>
</dbReference>
<dbReference type="HAMAP" id="MF_00333">
    <property type="entry name" value="Coprogen_oxidas"/>
    <property type="match status" value="1"/>
</dbReference>
<dbReference type="InterPro" id="IPR001260">
    <property type="entry name" value="Coprogen_oxidase_aer"/>
</dbReference>
<dbReference type="InterPro" id="IPR036406">
    <property type="entry name" value="Coprogen_oxidase_aer_sf"/>
</dbReference>
<dbReference type="InterPro" id="IPR018375">
    <property type="entry name" value="Coprogen_oxidase_CS"/>
</dbReference>
<dbReference type="NCBIfam" id="NF003727">
    <property type="entry name" value="PRK05330.1"/>
    <property type="match status" value="1"/>
</dbReference>
<dbReference type="PANTHER" id="PTHR10755">
    <property type="entry name" value="COPROPORPHYRINOGEN III OXIDASE, MITOCHONDRIAL"/>
    <property type="match status" value="1"/>
</dbReference>
<dbReference type="PANTHER" id="PTHR10755:SF0">
    <property type="entry name" value="OXYGEN-DEPENDENT COPROPORPHYRINOGEN-III OXIDASE, MITOCHONDRIAL"/>
    <property type="match status" value="1"/>
</dbReference>
<dbReference type="Pfam" id="PF01218">
    <property type="entry name" value="Coprogen_oxidas"/>
    <property type="match status" value="1"/>
</dbReference>
<dbReference type="PIRSF" id="PIRSF000166">
    <property type="entry name" value="Coproporphyri_ox"/>
    <property type="match status" value="1"/>
</dbReference>
<dbReference type="PRINTS" id="PR00073">
    <property type="entry name" value="COPRGNOXDASE"/>
</dbReference>
<dbReference type="SUPFAM" id="SSF102886">
    <property type="entry name" value="Coproporphyrinogen III oxidase"/>
    <property type="match status" value="1"/>
</dbReference>
<dbReference type="PROSITE" id="PS01021">
    <property type="entry name" value="COPROGEN_OXIDASE"/>
    <property type="match status" value="1"/>
</dbReference>
<sequence>MSVPDTSAVKAFLLDLQQRICEGLEQLDGKGTFEADSWKREEGGGGTSRVLTNGKVFEQAGVNFSHVTGAAMPASATANRSELEGRSFEAMGVSLVIHPKNPFLPTTHANVRFFIAKKEGADPVWWFGGGFDLTPYYPFEEDVIEWHQNAHDLCQPFGESVYPKYKKWCDEYFFLPHRNETRGVGGLFFDDLNQDGFEKSFEFMQAVGNGFLTSYAPIVERRKDTEYGEKEREFQLYRRGRYVEFNLVYDRGTLFGLQTGGRTESILMSMPPLVRWQYAYTPEENSAEALLYTDFLKPKDWLNLDE</sequence>
<protein>
    <recommendedName>
        <fullName evidence="1">Oxygen-dependent coproporphyrinogen-III oxidase</fullName>
        <shortName evidence="1">CPO</shortName>
        <shortName evidence="1">Coprogen oxidase</shortName>
        <shortName evidence="1">Coproporphyrinogenase</shortName>
        <ecNumber evidence="1">1.3.3.3</ecNumber>
    </recommendedName>
</protein>
<accession>A8FP82</accession>
<feature type="chain" id="PRO_1000079264" description="Oxygen-dependent coproporphyrinogen-III oxidase">
    <location>
        <begin position="1"/>
        <end position="306"/>
    </location>
</feature>
<feature type="region of interest" description="Important for dimerization" evidence="1">
    <location>
        <begin position="242"/>
        <end position="277"/>
    </location>
</feature>
<feature type="active site" description="Proton donor" evidence="1">
    <location>
        <position position="108"/>
    </location>
</feature>
<feature type="binding site" evidence="1">
    <location>
        <position position="94"/>
    </location>
    <ligand>
        <name>substrate</name>
    </ligand>
</feature>
<feature type="binding site" evidence="1">
    <location>
        <position position="98"/>
    </location>
    <ligand>
        <name>a divalent metal cation</name>
        <dbReference type="ChEBI" id="CHEBI:60240"/>
    </ligand>
</feature>
<feature type="binding site" evidence="1">
    <location>
        <position position="108"/>
    </location>
    <ligand>
        <name>a divalent metal cation</name>
        <dbReference type="ChEBI" id="CHEBI:60240"/>
    </ligand>
</feature>
<feature type="binding site" evidence="1">
    <location>
        <begin position="110"/>
        <end position="112"/>
    </location>
    <ligand>
        <name>substrate</name>
    </ligand>
</feature>
<feature type="binding site" evidence="1">
    <location>
        <position position="147"/>
    </location>
    <ligand>
        <name>a divalent metal cation</name>
        <dbReference type="ChEBI" id="CHEBI:60240"/>
    </ligand>
</feature>
<feature type="binding site" evidence="1">
    <location>
        <position position="177"/>
    </location>
    <ligand>
        <name>a divalent metal cation</name>
        <dbReference type="ChEBI" id="CHEBI:60240"/>
    </ligand>
</feature>
<feature type="binding site" evidence="1">
    <location>
        <begin position="260"/>
        <end position="262"/>
    </location>
    <ligand>
        <name>substrate</name>
    </ligand>
</feature>
<feature type="site" description="Important for dimerization" evidence="1">
    <location>
        <position position="177"/>
    </location>
</feature>
<reference key="1">
    <citation type="submission" date="2007-08" db="EMBL/GenBank/DDBJ databases">
        <title>Complete sequence of Shewanella sediminis HAW-EB3.</title>
        <authorList>
            <consortium name="US DOE Joint Genome Institute"/>
            <person name="Copeland A."/>
            <person name="Lucas S."/>
            <person name="Lapidus A."/>
            <person name="Barry K."/>
            <person name="Glavina del Rio T."/>
            <person name="Dalin E."/>
            <person name="Tice H."/>
            <person name="Pitluck S."/>
            <person name="Chertkov O."/>
            <person name="Brettin T."/>
            <person name="Bruce D."/>
            <person name="Detter J.C."/>
            <person name="Han C."/>
            <person name="Schmutz J."/>
            <person name="Larimer F."/>
            <person name="Land M."/>
            <person name="Hauser L."/>
            <person name="Kyrpides N."/>
            <person name="Kim E."/>
            <person name="Zhao J.-S."/>
            <person name="Richardson P."/>
        </authorList>
    </citation>
    <scope>NUCLEOTIDE SEQUENCE [LARGE SCALE GENOMIC DNA]</scope>
    <source>
        <strain>HAW-EB3</strain>
    </source>
</reference>
<evidence type="ECO:0000255" key="1">
    <source>
        <dbReference type="HAMAP-Rule" id="MF_00333"/>
    </source>
</evidence>
<organism>
    <name type="scientific">Shewanella sediminis (strain HAW-EB3)</name>
    <dbReference type="NCBI Taxonomy" id="425104"/>
    <lineage>
        <taxon>Bacteria</taxon>
        <taxon>Pseudomonadati</taxon>
        <taxon>Pseudomonadota</taxon>
        <taxon>Gammaproteobacteria</taxon>
        <taxon>Alteromonadales</taxon>
        <taxon>Shewanellaceae</taxon>
        <taxon>Shewanella</taxon>
    </lineage>
</organism>